<proteinExistence type="inferred from homology"/>
<evidence type="ECO:0000255" key="1">
    <source>
        <dbReference type="HAMAP-Rule" id="MF_00020"/>
    </source>
</evidence>
<organism>
    <name type="scientific">Actinobacillus pleuropneumoniae serotype 7 (strain AP76)</name>
    <dbReference type="NCBI Taxonomy" id="537457"/>
    <lineage>
        <taxon>Bacteria</taxon>
        <taxon>Pseudomonadati</taxon>
        <taxon>Pseudomonadota</taxon>
        <taxon>Gammaproteobacteria</taxon>
        <taxon>Pasteurellales</taxon>
        <taxon>Pasteurellaceae</taxon>
        <taxon>Actinobacillus</taxon>
    </lineage>
</organism>
<sequence length="402" mass="43555">MSKNLILILNCGSSSLKFAVLDPKTGDEKLSGLAEAFNLEDARIKWKLHGEKGNADLGAGAAHSEALTFIANELLSEELKSSIGAIGHRIVHGGEQFTSSVVINDDVVKGIEHAIQFAPLHNPAHLIGIKEAFRIFPELKEKNVAVFDTAFHQTMPEEAFLYALPYKLYKEHGIRRYGAHGTSHLFITSQVAELAGKPVDQTNAIICHLGNGGSVSVVRNGKCIDTSMGLTPLEGLVMGTRSGDIDPAIVFYLYKNLGMSMEQIEDTLVKKSGLLGLTEVTSDCRYAEDNYEDASKPEAKRALDVYSYRLAKYIGAYMAILGDDHLDAIAFTGGIGENSGHVRELALNHLKLFGVKLDVERNLAARFGKSGVITADDSTFKAVVIPTNEELVIAQDTAKLAL</sequence>
<comment type="function">
    <text evidence="1">Catalyzes the formation of acetyl phosphate from acetate and ATP. Can also catalyze the reverse reaction.</text>
</comment>
<comment type="catalytic activity">
    <reaction evidence="1">
        <text>acetate + ATP = acetyl phosphate + ADP</text>
        <dbReference type="Rhea" id="RHEA:11352"/>
        <dbReference type="ChEBI" id="CHEBI:22191"/>
        <dbReference type="ChEBI" id="CHEBI:30089"/>
        <dbReference type="ChEBI" id="CHEBI:30616"/>
        <dbReference type="ChEBI" id="CHEBI:456216"/>
        <dbReference type="EC" id="2.7.2.1"/>
    </reaction>
</comment>
<comment type="cofactor">
    <cofactor evidence="1">
        <name>Mg(2+)</name>
        <dbReference type="ChEBI" id="CHEBI:18420"/>
    </cofactor>
    <cofactor evidence="1">
        <name>Mn(2+)</name>
        <dbReference type="ChEBI" id="CHEBI:29035"/>
    </cofactor>
    <text evidence="1">Mg(2+). Can also accept Mn(2+).</text>
</comment>
<comment type="pathway">
    <text evidence="1">Metabolic intermediate biosynthesis; acetyl-CoA biosynthesis; acetyl-CoA from acetate: step 1/2.</text>
</comment>
<comment type="subunit">
    <text evidence="1">Homodimer.</text>
</comment>
<comment type="subcellular location">
    <subcellularLocation>
        <location evidence="1">Cytoplasm</location>
    </subcellularLocation>
</comment>
<comment type="similarity">
    <text evidence="1">Belongs to the acetokinase family.</text>
</comment>
<feature type="chain" id="PRO_1000089956" description="Acetate kinase">
    <location>
        <begin position="1"/>
        <end position="402"/>
    </location>
</feature>
<feature type="active site" description="Proton donor/acceptor" evidence="1">
    <location>
        <position position="148"/>
    </location>
</feature>
<feature type="binding site" evidence="1">
    <location>
        <position position="10"/>
    </location>
    <ligand>
        <name>Mg(2+)</name>
        <dbReference type="ChEBI" id="CHEBI:18420"/>
    </ligand>
</feature>
<feature type="binding site" evidence="1">
    <location>
        <position position="17"/>
    </location>
    <ligand>
        <name>ATP</name>
        <dbReference type="ChEBI" id="CHEBI:30616"/>
    </ligand>
</feature>
<feature type="binding site" evidence="1">
    <location>
        <position position="89"/>
    </location>
    <ligand>
        <name>substrate</name>
    </ligand>
</feature>
<feature type="binding site" evidence="1">
    <location>
        <begin position="208"/>
        <end position="212"/>
    </location>
    <ligand>
        <name>ATP</name>
        <dbReference type="ChEBI" id="CHEBI:30616"/>
    </ligand>
</feature>
<feature type="binding site" evidence="1">
    <location>
        <begin position="283"/>
        <end position="285"/>
    </location>
    <ligand>
        <name>ATP</name>
        <dbReference type="ChEBI" id="CHEBI:30616"/>
    </ligand>
</feature>
<feature type="binding site" evidence="1">
    <location>
        <begin position="334"/>
        <end position="338"/>
    </location>
    <ligand>
        <name>ATP</name>
        <dbReference type="ChEBI" id="CHEBI:30616"/>
    </ligand>
</feature>
<feature type="binding site" evidence="1">
    <location>
        <position position="389"/>
    </location>
    <ligand>
        <name>Mg(2+)</name>
        <dbReference type="ChEBI" id="CHEBI:18420"/>
    </ligand>
</feature>
<feature type="site" description="Transition state stabilizer" evidence="1">
    <location>
        <position position="180"/>
    </location>
</feature>
<feature type="site" description="Transition state stabilizer" evidence="1">
    <location>
        <position position="241"/>
    </location>
</feature>
<reference key="1">
    <citation type="submission" date="2008-06" db="EMBL/GenBank/DDBJ databases">
        <title>Genome and proteome analysis of A. pleuropneumoniae serotype 7.</title>
        <authorList>
            <person name="Linke B."/>
            <person name="Buettner F."/>
            <person name="Martinez-Arias R."/>
            <person name="Goesmann A."/>
            <person name="Baltes N."/>
            <person name="Tegetmeyer H."/>
            <person name="Singh M."/>
            <person name="Gerlach G.F."/>
        </authorList>
    </citation>
    <scope>NUCLEOTIDE SEQUENCE [LARGE SCALE GENOMIC DNA]</scope>
    <source>
        <strain>AP76</strain>
    </source>
</reference>
<accession>B3H169</accession>
<protein>
    <recommendedName>
        <fullName evidence="1">Acetate kinase</fullName>
        <ecNumber evidence="1">2.7.2.1</ecNumber>
    </recommendedName>
    <alternativeName>
        <fullName evidence="1">Acetokinase</fullName>
    </alternativeName>
</protein>
<dbReference type="EC" id="2.7.2.1" evidence="1"/>
<dbReference type="EMBL" id="CP001091">
    <property type="protein sequence ID" value="ACE61338.1"/>
    <property type="molecule type" value="Genomic_DNA"/>
</dbReference>
<dbReference type="RefSeq" id="WP_005596931.1">
    <property type="nucleotide sequence ID" value="NC_010939.1"/>
</dbReference>
<dbReference type="SMR" id="B3H169"/>
<dbReference type="KEGG" id="apa:APP7_0686"/>
<dbReference type="HOGENOM" id="CLU_020352_0_1_6"/>
<dbReference type="UniPathway" id="UPA00340">
    <property type="reaction ID" value="UER00458"/>
</dbReference>
<dbReference type="Proteomes" id="UP000001226">
    <property type="component" value="Chromosome"/>
</dbReference>
<dbReference type="GO" id="GO:0005829">
    <property type="term" value="C:cytosol"/>
    <property type="evidence" value="ECO:0007669"/>
    <property type="project" value="TreeGrafter"/>
</dbReference>
<dbReference type="GO" id="GO:0008776">
    <property type="term" value="F:acetate kinase activity"/>
    <property type="evidence" value="ECO:0007669"/>
    <property type="project" value="UniProtKB-UniRule"/>
</dbReference>
<dbReference type="GO" id="GO:0005524">
    <property type="term" value="F:ATP binding"/>
    <property type="evidence" value="ECO:0007669"/>
    <property type="project" value="UniProtKB-KW"/>
</dbReference>
<dbReference type="GO" id="GO:0000287">
    <property type="term" value="F:magnesium ion binding"/>
    <property type="evidence" value="ECO:0007669"/>
    <property type="project" value="UniProtKB-UniRule"/>
</dbReference>
<dbReference type="GO" id="GO:0006083">
    <property type="term" value="P:acetate metabolic process"/>
    <property type="evidence" value="ECO:0007669"/>
    <property type="project" value="TreeGrafter"/>
</dbReference>
<dbReference type="GO" id="GO:0006085">
    <property type="term" value="P:acetyl-CoA biosynthetic process"/>
    <property type="evidence" value="ECO:0007669"/>
    <property type="project" value="UniProtKB-UniRule"/>
</dbReference>
<dbReference type="CDD" id="cd24010">
    <property type="entry name" value="ASKHA_NBD_AcK_PK"/>
    <property type="match status" value="1"/>
</dbReference>
<dbReference type="FunFam" id="3.30.420.40:FF:000041">
    <property type="entry name" value="Acetate kinase"/>
    <property type="match status" value="1"/>
</dbReference>
<dbReference type="FunFam" id="3.30.420.40:FF:000042">
    <property type="entry name" value="Acetate kinase"/>
    <property type="match status" value="1"/>
</dbReference>
<dbReference type="Gene3D" id="3.30.420.40">
    <property type="match status" value="2"/>
</dbReference>
<dbReference type="HAMAP" id="MF_00020">
    <property type="entry name" value="Acetate_kinase"/>
    <property type="match status" value="1"/>
</dbReference>
<dbReference type="InterPro" id="IPR004372">
    <property type="entry name" value="Ac/propionate_kinase"/>
</dbReference>
<dbReference type="InterPro" id="IPR000890">
    <property type="entry name" value="Aliphatic_acid_kin_short-chain"/>
</dbReference>
<dbReference type="InterPro" id="IPR023865">
    <property type="entry name" value="Aliphatic_acid_kinase_CS"/>
</dbReference>
<dbReference type="InterPro" id="IPR043129">
    <property type="entry name" value="ATPase_NBD"/>
</dbReference>
<dbReference type="NCBIfam" id="TIGR00016">
    <property type="entry name" value="ackA"/>
    <property type="match status" value="1"/>
</dbReference>
<dbReference type="PANTHER" id="PTHR21060">
    <property type="entry name" value="ACETATE KINASE"/>
    <property type="match status" value="1"/>
</dbReference>
<dbReference type="PANTHER" id="PTHR21060:SF21">
    <property type="entry name" value="ACETATE KINASE"/>
    <property type="match status" value="1"/>
</dbReference>
<dbReference type="Pfam" id="PF00871">
    <property type="entry name" value="Acetate_kinase"/>
    <property type="match status" value="1"/>
</dbReference>
<dbReference type="PIRSF" id="PIRSF000722">
    <property type="entry name" value="Acetate_prop_kin"/>
    <property type="match status" value="1"/>
</dbReference>
<dbReference type="PRINTS" id="PR00471">
    <property type="entry name" value="ACETATEKNASE"/>
</dbReference>
<dbReference type="SUPFAM" id="SSF53067">
    <property type="entry name" value="Actin-like ATPase domain"/>
    <property type="match status" value="2"/>
</dbReference>
<dbReference type="PROSITE" id="PS01075">
    <property type="entry name" value="ACETATE_KINASE_1"/>
    <property type="match status" value="1"/>
</dbReference>
<dbReference type="PROSITE" id="PS01076">
    <property type="entry name" value="ACETATE_KINASE_2"/>
    <property type="match status" value="1"/>
</dbReference>
<gene>
    <name evidence="1" type="primary">ackA</name>
    <name type="ordered locus">APP7_0686</name>
</gene>
<keyword id="KW-0067">ATP-binding</keyword>
<keyword id="KW-0963">Cytoplasm</keyword>
<keyword id="KW-0418">Kinase</keyword>
<keyword id="KW-0460">Magnesium</keyword>
<keyword id="KW-0479">Metal-binding</keyword>
<keyword id="KW-0547">Nucleotide-binding</keyword>
<keyword id="KW-0808">Transferase</keyword>
<name>ACKA_ACTP7</name>